<protein>
    <recommendedName>
        <fullName evidence="1">Nucleoid-associated protein SPT_1149</fullName>
    </recommendedName>
</protein>
<dbReference type="EMBL" id="CP000921">
    <property type="protein sequence ID" value="ACO23631.1"/>
    <property type="molecule type" value="Genomic_DNA"/>
</dbReference>
<dbReference type="RefSeq" id="WP_000981526.1">
    <property type="nucleotide sequence ID" value="NC_012469.1"/>
</dbReference>
<dbReference type="SMR" id="C1CRK3"/>
<dbReference type="KEGG" id="snt:SPT_1149"/>
<dbReference type="HOGENOM" id="CLU_140930_1_1_9"/>
<dbReference type="GO" id="GO:0043590">
    <property type="term" value="C:bacterial nucleoid"/>
    <property type="evidence" value="ECO:0007669"/>
    <property type="project" value="UniProtKB-UniRule"/>
</dbReference>
<dbReference type="GO" id="GO:0005829">
    <property type="term" value="C:cytosol"/>
    <property type="evidence" value="ECO:0007669"/>
    <property type="project" value="TreeGrafter"/>
</dbReference>
<dbReference type="GO" id="GO:0003677">
    <property type="term" value="F:DNA binding"/>
    <property type="evidence" value="ECO:0007669"/>
    <property type="project" value="UniProtKB-UniRule"/>
</dbReference>
<dbReference type="FunFam" id="3.30.1310.10:FF:000005">
    <property type="entry name" value="Nucleoid-associated protein SPAR113_1167"/>
    <property type="match status" value="1"/>
</dbReference>
<dbReference type="Gene3D" id="3.30.1310.10">
    <property type="entry name" value="Nucleoid-associated protein YbaB-like domain"/>
    <property type="match status" value="1"/>
</dbReference>
<dbReference type="HAMAP" id="MF_00274">
    <property type="entry name" value="DNA_YbaB_EbfC"/>
    <property type="match status" value="1"/>
</dbReference>
<dbReference type="InterPro" id="IPR036894">
    <property type="entry name" value="YbaB-like_sf"/>
</dbReference>
<dbReference type="InterPro" id="IPR004401">
    <property type="entry name" value="YbaB/EbfC"/>
</dbReference>
<dbReference type="NCBIfam" id="TIGR00103">
    <property type="entry name" value="DNA_YbaB_EbfC"/>
    <property type="match status" value="1"/>
</dbReference>
<dbReference type="PANTHER" id="PTHR33449">
    <property type="entry name" value="NUCLEOID-ASSOCIATED PROTEIN YBAB"/>
    <property type="match status" value="1"/>
</dbReference>
<dbReference type="PANTHER" id="PTHR33449:SF1">
    <property type="entry name" value="NUCLEOID-ASSOCIATED PROTEIN YBAB"/>
    <property type="match status" value="1"/>
</dbReference>
<dbReference type="Pfam" id="PF02575">
    <property type="entry name" value="YbaB_DNA_bd"/>
    <property type="match status" value="1"/>
</dbReference>
<dbReference type="PIRSF" id="PIRSF004555">
    <property type="entry name" value="UCP004555"/>
    <property type="match status" value="1"/>
</dbReference>
<dbReference type="SUPFAM" id="SSF82607">
    <property type="entry name" value="YbaB-like"/>
    <property type="match status" value="1"/>
</dbReference>
<evidence type="ECO:0000255" key="1">
    <source>
        <dbReference type="HAMAP-Rule" id="MF_00274"/>
    </source>
</evidence>
<sequence>MMNMQNMMRQAQKLQKQMEQSQAELAAMQFVGKSAQDLVQATLTGDKKVVSIDFNPAVVDPEDLETLSDMTVQAINSALEQIDETTKKKLGAFAGKLPF</sequence>
<comment type="function">
    <text evidence="1">Binds to DNA and alters its conformation. May be involved in regulation of gene expression, nucleoid organization and DNA protection.</text>
</comment>
<comment type="subunit">
    <text evidence="1">Homodimer.</text>
</comment>
<comment type="subcellular location">
    <subcellularLocation>
        <location evidence="1">Cytoplasm</location>
        <location evidence="1">Nucleoid</location>
    </subcellularLocation>
</comment>
<comment type="similarity">
    <text evidence="1">Belongs to the YbaB/EbfC family.</text>
</comment>
<name>Y1149_STRZT</name>
<feature type="chain" id="PRO_1000197682" description="Nucleoid-associated protein SPT_1149">
    <location>
        <begin position="1"/>
        <end position="99"/>
    </location>
</feature>
<organism>
    <name type="scientific">Streptococcus pneumoniae (strain Taiwan19F-14)</name>
    <dbReference type="NCBI Taxonomy" id="487213"/>
    <lineage>
        <taxon>Bacteria</taxon>
        <taxon>Bacillati</taxon>
        <taxon>Bacillota</taxon>
        <taxon>Bacilli</taxon>
        <taxon>Lactobacillales</taxon>
        <taxon>Streptococcaceae</taxon>
        <taxon>Streptococcus</taxon>
    </lineage>
</organism>
<keyword id="KW-0963">Cytoplasm</keyword>
<keyword id="KW-0238">DNA-binding</keyword>
<proteinExistence type="inferred from homology"/>
<reference key="1">
    <citation type="journal article" date="2010" name="Genome Biol.">
        <title>Structure and dynamics of the pan-genome of Streptococcus pneumoniae and closely related species.</title>
        <authorList>
            <person name="Donati C."/>
            <person name="Hiller N.L."/>
            <person name="Tettelin H."/>
            <person name="Muzzi A."/>
            <person name="Croucher N.J."/>
            <person name="Angiuoli S.V."/>
            <person name="Oggioni M."/>
            <person name="Dunning Hotopp J.C."/>
            <person name="Hu F.Z."/>
            <person name="Riley D.R."/>
            <person name="Covacci A."/>
            <person name="Mitchell T.J."/>
            <person name="Bentley S.D."/>
            <person name="Kilian M."/>
            <person name="Ehrlich G.D."/>
            <person name="Rappuoli R."/>
            <person name="Moxon E.R."/>
            <person name="Masignani V."/>
        </authorList>
    </citation>
    <scope>NUCLEOTIDE SEQUENCE [LARGE SCALE GENOMIC DNA]</scope>
    <source>
        <strain>Taiwan19F-14</strain>
    </source>
</reference>
<gene>
    <name type="ordered locus">SPT_1149</name>
</gene>
<accession>C1CRK3</accession>